<organism>
    <name type="scientific">Magnetococcus marinus (strain ATCC BAA-1437 / JCM 17883 / MC-1)</name>
    <dbReference type="NCBI Taxonomy" id="156889"/>
    <lineage>
        <taxon>Bacteria</taxon>
        <taxon>Pseudomonadati</taxon>
        <taxon>Pseudomonadota</taxon>
        <taxon>Alphaproteobacteria</taxon>
        <taxon>Magnetococcales</taxon>
        <taxon>Magnetococcaceae</taxon>
        <taxon>Magnetococcus</taxon>
    </lineage>
</organism>
<feature type="chain" id="PRO_1000005952" description="DNA-directed RNA polymerase subunit omega">
    <location>
        <begin position="1"/>
        <end position="121"/>
    </location>
</feature>
<feature type="region of interest" description="Disordered" evidence="2">
    <location>
        <begin position="95"/>
        <end position="121"/>
    </location>
</feature>
<feature type="compositionally biased region" description="Acidic residues" evidence="2">
    <location>
        <begin position="103"/>
        <end position="121"/>
    </location>
</feature>
<gene>
    <name evidence="1" type="primary">rpoZ</name>
    <name type="ordered locus">Mmc1_0252</name>
</gene>
<keyword id="KW-0240">DNA-directed RNA polymerase</keyword>
<keyword id="KW-0548">Nucleotidyltransferase</keyword>
<keyword id="KW-1185">Reference proteome</keyword>
<keyword id="KW-0804">Transcription</keyword>
<keyword id="KW-0808">Transferase</keyword>
<proteinExistence type="inferred from homology"/>
<reference key="1">
    <citation type="journal article" date="2009" name="Appl. Environ. Microbiol.">
        <title>Complete genome sequence of the chemolithoautotrophic marine magnetotactic coccus strain MC-1.</title>
        <authorList>
            <person name="Schubbe S."/>
            <person name="Williams T.J."/>
            <person name="Xie G."/>
            <person name="Kiss H.E."/>
            <person name="Brettin T.S."/>
            <person name="Martinez D."/>
            <person name="Ross C.A."/>
            <person name="Schuler D."/>
            <person name="Cox B.L."/>
            <person name="Nealson K.H."/>
            <person name="Bazylinski D.A."/>
        </authorList>
    </citation>
    <scope>NUCLEOTIDE SEQUENCE [LARGE SCALE GENOMIC DNA]</scope>
    <source>
        <strain>ATCC BAA-1437 / JCM 17883 / MC-1</strain>
    </source>
</reference>
<evidence type="ECO:0000255" key="1">
    <source>
        <dbReference type="HAMAP-Rule" id="MF_00366"/>
    </source>
</evidence>
<evidence type="ECO:0000256" key="2">
    <source>
        <dbReference type="SAM" id="MobiDB-lite"/>
    </source>
</evidence>
<name>RPOZ_MAGMM</name>
<accession>A0L486</accession>
<sequence>MARVTVDDCVQHVSNRFELVILAAKRARQLAKGAEPEVSVDRDKNTVVALREIAESKLNMDDLRRMEETVVEEEVVDEVIRFEIADLAVSDDLADGDAANDLQGEEDDLGLGLDEAEDLGF</sequence>
<protein>
    <recommendedName>
        <fullName evidence="1">DNA-directed RNA polymerase subunit omega</fullName>
        <shortName evidence="1">RNAP omega subunit</shortName>
        <ecNumber evidence="1">2.7.7.6</ecNumber>
    </recommendedName>
    <alternativeName>
        <fullName evidence="1">RNA polymerase omega subunit</fullName>
    </alternativeName>
    <alternativeName>
        <fullName evidence="1">Transcriptase subunit omega</fullName>
    </alternativeName>
</protein>
<comment type="function">
    <text evidence="1">Promotes RNA polymerase assembly. Latches the N- and C-terminal regions of the beta' subunit thereby facilitating its interaction with the beta and alpha subunits.</text>
</comment>
<comment type="catalytic activity">
    <reaction evidence="1">
        <text>RNA(n) + a ribonucleoside 5'-triphosphate = RNA(n+1) + diphosphate</text>
        <dbReference type="Rhea" id="RHEA:21248"/>
        <dbReference type="Rhea" id="RHEA-COMP:14527"/>
        <dbReference type="Rhea" id="RHEA-COMP:17342"/>
        <dbReference type="ChEBI" id="CHEBI:33019"/>
        <dbReference type="ChEBI" id="CHEBI:61557"/>
        <dbReference type="ChEBI" id="CHEBI:140395"/>
        <dbReference type="EC" id="2.7.7.6"/>
    </reaction>
</comment>
<comment type="subunit">
    <text evidence="1">The RNAP catalytic core consists of 2 alpha, 1 beta, 1 beta' and 1 omega subunit. When a sigma factor is associated with the core the holoenzyme is formed, which can initiate transcription.</text>
</comment>
<comment type="similarity">
    <text evidence="1">Belongs to the RNA polymerase subunit omega family.</text>
</comment>
<dbReference type="EC" id="2.7.7.6" evidence="1"/>
<dbReference type="EMBL" id="CP000471">
    <property type="protein sequence ID" value="ABK42779.1"/>
    <property type="molecule type" value="Genomic_DNA"/>
</dbReference>
<dbReference type="SMR" id="A0L486"/>
<dbReference type="STRING" id="156889.Mmc1_0252"/>
<dbReference type="KEGG" id="mgm:Mmc1_0252"/>
<dbReference type="eggNOG" id="COG1758">
    <property type="taxonomic scope" value="Bacteria"/>
</dbReference>
<dbReference type="HOGENOM" id="CLU_125406_5_3_5"/>
<dbReference type="OrthoDB" id="9796300at2"/>
<dbReference type="Proteomes" id="UP000002586">
    <property type="component" value="Chromosome"/>
</dbReference>
<dbReference type="GO" id="GO:0000428">
    <property type="term" value="C:DNA-directed RNA polymerase complex"/>
    <property type="evidence" value="ECO:0007669"/>
    <property type="project" value="UniProtKB-KW"/>
</dbReference>
<dbReference type="GO" id="GO:0003677">
    <property type="term" value="F:DNA binding"/>
    <property type="evidence" value="ECO:0007669"/>
    <property type="project" value="UniProtKB-UniRule"/>
</dbReference>
<dbReference type="GO" id="GO:0003899">
    <property type="term" value="F:DNA-directed RNA polymerase activity"/>
    <property type="evidence" value="ECO:0007669"/>
    <property type="project" value="UniProtKB-UniRule"/>
</dbReference>
<dbReference type="GO" id="GO:0006351">
    <property type="term" value="P:DNA-templated transcription"/>
    <property type="evidence" value="ECO:0007669"/>
    <property type="project" value="UniProtKB-UniRule"/>
</dbReference>
<dbReference type="Gene3D" id="3.90.940.10">
    <property type="match status" value="1"/>
</dbReference>
<dbReference type="HAMAP" id="MF_00366">
    <property type="entry name" value="RNApol_bact_RpoZ"/>
    <property type="match status" value="1"/>
</dbReference>
<dbReference type="InterPro" id="IPR003716">
    <property type="entry name" value="DNA-dir_RNA_pol_omega"/>
</dbReference>
<dbReference type="InterPro" id="IPR006110">
    <property type="entry name" value="Pol_omega/Rpo6/RPB6"/>
</dbReference>
<dbReference type="InterPro" id="IPR036161">
    <property type="entry name" value="RPB6/omega-like_sf"/>
</dbReference>
<dbReference type="NCBIfam" id="TIGR00690">
    <property type="entry name" value="rpoZ"/>
    <property type="match status" value="1"/>
</dbReference>
<dbReference type="PANTHER" id="PTHR34476">
    <property type="entry name" value="DNA-DIRECTED RNA POLYMERASE SUBUNIT OMEGA"/>
    <property type="match status" value="1"/>
</dbReference>
<dbReference type="PANTHER" id="PTHR34476:SF1">
    <property type="entry name" value="DNA-DIRECTED RNA POLYMERASE SUBUNIT OMEGA"/>
    <property type="match status" value="1"/>
</dbReference>
<dbReference type="Pfam" id="PF01192">
    <property type="entry name" value="RNA_pol_Rpb6"/>
    <property type="match status" value="1"/>
</dbReference>
<dbReference type="SMART" id="SM01409">
    <property type="entry name" value="RNA_pol_Rpb6"/>
    <property type="match status" value="1"/>
</dbReference>
<dbReference type="SUPFAM" id="SSF63562">
    <property type="entry name" value="RPB6/omega subunit-like"/>
    <property type="match status" value="1"/>
</dbReference>